<keyword id="KW-0963">Cytoplasm</keyword>
<keyword id="KW-0378">Hydrolase</keyword>
<keyword id="KW-0479">Metal-binding</keyword>
<keyword id="KW-0547">Nucleotide-binding</keyword>
<keyword id="KW-1185">Reference proteome</keyword>
<sequence length="257" mass="28096">MKNILLTNDDGFEAKGLLELAKKLGKIANVVIAAPSTEKSGSSQSLTLTRPLRFIKIDENFYKLDDATPADCVYLGLHALFKTKPDLIVSGINHGANIAEDITCSGTCGAAMQGALQGIPSLAVSQFFTGKSLKNSGFDLACDIAYKVVCKIFENGFPLLNKQFLNLNIPSVCKKDFKGLKIAPAGRKFYDTNAQNGINPRGKKYYWLGKMDIKFDISENQNTDIGLLSEGFATLTPIKPDMTAYEQINGLEKWLKI</sequence>
<dbReference type="EC" id="3.1.3.5" evidence="1"/>
<dbReference type="EMBL" id="CP000776">
    <property type="protein sequence ID" value="ABS51900.1"/>
    <property type="molecule type" value="Genomic_DNA"/>
</dbReference>
<dbReference type="RefSeq" id="WP_012109165.1">
    <property type="nucleotide sequence ID" value="NC_009714.1"/>
</dbReference>
<dbReference type="SMR" id="A7I2X3"/>
<dbReference type="STRING" id="360107.CHAB381_1313"/>
<dbReference type="KEGG" id="cha:CHAB381_1313"/>
<dbReference type="eggNOG" id="COG0496">
    <property type="taxonomic scope" value="Bacteria"/>
</dbReference>
<dbReference type="HOGENOM" id="CLU_045192_1_2_7"/>
<dbReference type="OrthoDB" id="9780815at2"/>
<dbReference type="Proteomes" id="UP000002407">
    <property type="component" value="Chromosome"/>
</dbReference>
<dbReference type="GO" id="GO:0005737">
    <property type="term" value="C:cytoplasm"/>
    <property type="evidence" value="ECO:0007669"/>
    <property type="project" value="UniProtKB-SubCell"/>
</dbReference>
<dbReference type="GO" id="GO:0008254">
    <property type="term" value="F:3'-nucleotidase activity"/>
    <property type="evidence" value="ECO:0007669"/>
    <property type="project" value="TreeGrafter"/>
</dbReference>
<dbReference type="GO" id="GO:0008253">
    <property type="term" value="F:5'-nucleotidase activity"/>
    <property type="evidence" value="ECO:0007669"/>
    <property type="project" value="UniProtKB-UniRule"/>
</dbReference>
<dbReference type="GO" id="GO:0004309">
    <property type="term" value="F:exopolyphosphatase activity"/>
    <property type="evidence" value="ECO:0007669"/>
    <property type="project" value="TreeGrafter"/>
</dbReference>
<dbReference type="GO" id="GO:0046872">
    <property type="term" value="F:metal ion binding"/>
    <property type="evidence" value="ECO:0007669"/>
    <property type="project" value="UniProtKB-UniRule"/>
</dbReference>
<dbReference type="GO" id="GO:0000166">
    <property type="term" value="F:nucleotide binding"/>
    <property type="evidence" value="ECO:0007669"/>
    <property type="project" value="UniProtKB-KW"/>
</dbReference>
<dbReference type="Gene3D" id="3.40.1210.10">
    <property type="entry name" value="Survival protein SurE-like phosphatase/nucleotidase"/>
    <property type="match status" value="1"/>
</dbReference>
<dbReference type="HAMAP" id="MF_00060">
    <property type="entry name" value="SurE"/>
    <property type="match status" value="1"/>
</dbReference>
<dbReference type="InterPro" id="IPR030048">
    <property type="entry name" value="SurE"/>
</dbReference>
<dbReference type="InterPro" id="IPR002828">
    <property type="entry name" value="SurE-like_Pase/nucleotidase"/>
</dbReference>
<dbReference type="InterPro" id="IPR036523">
    <property type="entry name" value="SurE-like_sf"/>
</dbReference>
<dbReference type="NCBIfam" id="NF001490">
    <property type="entry name" value="PRK00346.1-4"/>
    <property type="match status" value="1"/>
</dbReference>
<dbReference type="NCBIfam" id="NF001494">
    <property type="entry name" value="PRK00346.2-4"/>
    <property type="match status" value="1"/>
</dbReference>
<dbReference type="NCBIfam" id="TIGR00087">
    <property type="entry name" value="surE"/>
    <property type="match status" value="1"/>
</dbReference>
<dbReference type="PANTHER" id="PTHR30457">
    <property type="entry name" value="5'-NUCLEOTIDASE SURE"/>
    <property type="match status" value="1"/>
</dbReference>
<dbReference type="PANTHER" id="PTHR30457:SF12">
    <property type="entry name" value="5'_3'-NUCLEOTIDASE SURE"/>
    <property type="match status" value="1"/>
</dbReference>
<dbReference type="Pfam" id="PF01975">
    <property type="entry name" value="SurE"/>
    <property type="match status" value="1"/>
</dbReference>
<dbReference type="SUPFAM" id="SSF64167">
    <property type="entry name" value="SurE-like"/>
    <property type="match status" value="1"/>
</dbReference>
<protein>
    <recommendedName>
        <fullName evidence="1">5'-nucleotidase SurE</fullName>
        <ecNumber evidence="1">3.1.3.5</ecNumber>
    </recommendedName>
    <alternativeName>
        <fullName evidence="1">Nucleoside 5'-monophosphate phosphohydrolase</fullName>
    </alternativeName>
</protein>
<reference key="1">
    <citation type="submission" date="2007-07" db="EMBL/GenBank/DDBJ databases">
        <title>Complete genome sequence of Campylobacter hominis ATCC BAA-381, a commensal isolated from the human gastrointestinal tract.</title>
        <authorList>
            <person name="Fouts D.E."/>
            <person name="Mongodin E.F."/>
            <person name="Puiu D."/>
            <person name="Sebastian Y."/>
            <person name="Miller W.G."/>
            <person name="Mandrell R.E."/>
            <person name="Nelson K.E."/>
        </authorList>
    </citation>
    <scope>NUCLEOTIDE SEQUENCE [LARGE SCALE GENOMIC DNA]</scope>
    <source>
        <strain>ATCC BAA-381 / DSM 21671 / CCUG 45161 / LMG 19568 / NCTC 13146 / CH001A</strain>
    </source>
</reference>
<gene>
    <name evidence="1" type="primary">surE</name>
    <name type="ordered locus">CHAB381_1313</name>
</gene>
<accession>A7I2X3</accession>
<proteinExistence type="inferred from homology"/>
<organism>
    <name type="scientific">Campylobacter hominis (strain ATCC BAA-381 / DSM 21671 / CCUG 45161 / LMG 19568 / NCTC 13146 / CH001A)</name>
    <dbReference type="NCBI Taxonomy" id="360107"/>
    <lineage>
        <taxon>Bacteria</taxon>
        <taxon>Pseudomonadati</taxon>
        <taxon>Campylobacterota</taxon>
        <taxon>Epsilonproteobacteria</taxon>
        <taxon>Campylobacterales</taxon>
        <taxon>Campylobacteraceae</taxon>
        <taxon>Campylobacter</taxon>
    </lineage>
</organism>
<name>SURE_CAMHC</name>
<evidence type="ECO:0000255" key="1">
    <source>
        <dbReference type="HAMAP-Rule" id="MF_00060"/>
    </source>
</evidence>
<comment type="function">
    <text evidence="1">Nucleotidase that shows phosphatase activity on nucleoside 5'-monophosphates.</text>
</comment>
<comment type="catalytic activity">
    <reaction evidence="1">
        <text>a ribonucleoside 5'-phosphate + H2O = a ribonucleoside + phosphate</text>
        <dbReference type="Rhea" id="RHEA:12484"/>
        <dbReference type="ChEBI" id="CHEBI:15377"/>
        <dbReference type="ChEBI" id="CHEBI:18254"/>
        <dbReference type="ChEBI" id="CHEBI:43474"/>
        <dbReference type="ChEBI" id="CHEBI:58043"/>
        <dbReference type="EC" id="3.1.3.5"/>
    </reaction>
</comment>
<comment type="cofactor">
    <cofactor evidence="1">
        <name>a divalent metal cation</name>
        <dbReference type="ChEBI" id="CHEBI:60240"/>
    </cofactor>
    <text evidence="1">Binds 1 divalent metal cation per subunit.</text>
</comment>
<comment type="subcellular location">
    <subcellularLocation>
        <location evidence="1">Cytoplasm</location>
    </subcellularLocation>
</comment>
<comment type="similarity">
    <text evidence="1">Belongs to the SurE nucleotidase family.</text>
</comment>
<feature type="chain" id="PRO_1000007716" description="5'-nucleotidase SurE">
    <location>
        <begin position="1"/>
        <end position="257"/>
    </location>
</feature>
<feature type="binding site" evidence="1">
    <location>
        <position position="9"/>
    </location>
    <ligand>
        <name>a divalent metal cation</name>
        <dbReference type="ChEBI" id="CHEBI:60240"/>
    </ligand>
</feature>
<feature type="binding site" evidence="1">
    <location>
        <position position="10"/>
    </location>
    <ligand>
        <name>a divalent metal cation</name>
        <dbReference type="ChEBI" id="CHEBI:60240"/>
    </ligand>
</feature>
<feature type="binding site" evidence="1">
    <location>
        <position position="40"/>
    </location>
    <ligand>
        <name>a divalent metal cation</name>
        <dbReference type="ChEBI" id="CHEBI:60240"/>
    </ligand>
</feature>
<feature type="binding site" evidence="1">
    <location>
        <position position="93"/>
    </location>
    <ligand>
        <name>a divalent metal cation</name>
        <dbReference type="ChEBI" id="CHEBI:60240"/>
    </ligand>
</feature>